<feature type="chain" id="PRO_0000109695" description="Glutamate 5-kinase">
    <location>
        <begin position="1"/>
        <end position="367"/>
    </location>
</feature>
<feature type="domain" description="PUA" evidence="1">
    <location>
        <begin position="279"/>
        <end position="357"/>
    </location>
</feature>
<feature type="binding site" evidence="1">
    <location>
        <position position="17"/>
    </location>
    <ligand>
        <name>ATP</name>
        <dbReference type="ChEBI" id="CHEBI:30616"/>
    </ligand>
</feature>
<feature type="binding site" evidence="1">
    <location>
        <position position="57"/>
    </location>
    <ligand>
        <name>substrate</name>
    </ligand>
</feature>
<feature type="binding site" evidence="1">
    <location>
        <position position="144"/>
    </location>
    <ligand>
        <name>substrate</name>
    </ligand>
</feature>
<feature type="binding site" evidence="1">
    <location>
        <position position="156"/>
    </location>
    <ligand>
        <name>substrate</name>
    </ligand>
</feature>
<feature type="binding site" evidence="1">
    <location>
        <begin position="176"/>
        <end position="177"/>
    </location>
    <ligand>
        <name>ATP</name>
        <dbReference type="ChEBI" id="CHEBI:30616"/>
    </ligand>
</feature>
<feature type="binding site" evidence="1">
    <location>
        <begin position="217"/>
        <end position="223"/>
    </location>
    <ligand>
        <name>ATP</name>
        <dbReference type="ChEBI" id="CHEBI:30616"/>
    </ligand>
</feature>
<proteinExistence type="inferred from homology"/>
<name>PROB_MYCPA</name>
<dbReference type="EC" id="2.7.2.11" evidence="1"/>
<dbReference type="EMBL" id="AE016958">
    <property type="protein sequence ID" value="AAS04580.1"/>
    <property type="molecule type" value="Genomic_DNA"/>
</dbReference>
<dbReference type="SMR" id="Q73XP6"/>
<dbReference type="STRING" id="262316.MAP_2263c"/>
<dbReference type="KEGG" id="mpa:MAP_2263c"/>
<dbReference type="PATRIC" id="fig|262316.17.peg.2406"/>
<dbReference type="eggNOG" id="COG0263">
    <property type="taxonomic scope" value="Bacteria"/>
</dbReference>
<dbReference type="HOGENOM" id="CLU_025400_2_0_11"/>
<dbReference type="UniPathway" id="UPA00098">
    <property type="reaction ID" value="UER00359"/>
</dbReference>
<dbReference type="Proteomes" id="UP000000580">
    <property type="component" value="Chromosome"/>
</dbReference>
<dbReference type="GO" id="GO:0005829">
    <property type="term" value="C:cytosol"/>
    <property type="evidence" value="ECO:0007669"/>
    <property type="project" value="TreeGrafter"/>
</dbReference>
<dbReference type="GO" id="GO:0005524">
    <property type="term" value="F:ATP binding"/>
    <property type="evidence" value="ECO:0007669"/>
    <property type="project" value="UniProtKB-KW"/>
</dbReference>
<dbReference type="GO" id="GO:0004349">
    <property type="term" value="F:glutamate 5-kinase activity"/>
    <property type="evidence" value="ECO:0007669"/>
    <property type="project" value="UniProtKB-UniRule"/>
</dbReference>
<dbReference type="GO" id="GO:0003723">
    <property type="term" value="F:RNA binding"/>
    <property type="evidence" value="ECO:0007669"/>
    <property type="project" value="InterPro"/>
</dbReference>
<dbReference type="GO" id="GO:0055129">
    <property type="term" value="P:L-proline biosynthetic process"/>
    <property type="evidence" value="ECO:0007669"/>
    <property type="project" value="UniProtKB-UniRule"/>
</dbReference>
<dbReference type="CDD" id="cd04242">
    <property type="entry name" value="AAK_G5K_ProB"/>
    <property type="match status" value="1"/>
</dbReference>
<dbReference type="CDD" id="cd21157">
    <property type="entry name" value="PUA_G5K"/>
    <property type="match status" value="1"/>
</dbReference>
<dbReference type="FunFam" id="3.40.1160.10:FF:000018">
    <property type="entry name" value="Glutamate 5-kinase"/>
    <property type="match status" value="1"/>
</dbReference>
<dbReference type="Gene3D" id="3.40.1160.10">
    <property type="entry name" value="Acetylglutamate kinase-like"/>
    <property type="match status" value="1"/>
</dbReference>
<dbReference type="Gene3D" id="2.30.130.10">
    <property type="entry name" value="PUA domain"/>
    <property type="match status" value="1"/>
</dbReference>
<dbReference type="HAMAP" id="MF_00456">
    <property type="entry name" value="ProB"/>
    <property type="match status" value="1"/>
</dbReference>
<dbReference type="InterPro" id="IPR036393">
    <property type="entry name" value="AceGlu_kinase-like_sf"/>
</dbReference>
<dbReference type="InterPro" id="IPR001048">
    <property type="entry name" value="Asp/Glu/Uridylate_kinase"/>
</dbReference>
<dbReference type="InterPro" id="IPR041739">
    <property type="entry name" value="G5K_ProB"/>
</dbReference>
<dbReference type="InterPro" id="IPR001057">
    <property type="entry name" value="Glu/AcGlu_kinase"/>
</dbReference>
<dbReference type="InterPro" id="IPR011529">
    <property type="entry name" value="Glu_5kinase"/>
</dbReference>
<dbReference type="InterPro" id="IPR005715">
    <property type="entry name" value="Glu_5kinase/COase_Synthase"/>
</dbReference>
<dbReference type="InterPro" id="IPR019797">
    <property type="entry name" value="Glutamate_5-kinase_CS"/>
</dbReference>
<dbReference type="InterPro" id="IPR002478">
    <property type="entry name" value="PUA"/>
</dbReference>
<dbReference type="InterPro" id="IPR015947">
    <property type="entry name" value="PUA-like_sf"/>
</dbReference>
<dbReference type="InterPro" id="IPR036974">
    <property type="entry name" value="PUA_sf"/>
</dbReference>
<dbReference type="NCBIfam" id="TIGR01027">
    <property type="entry name" value="proB"/>
    <property type="match status" value="1"/>
</dbReference>
<dbReference type="PANTHER" id="PTHR43654">
    <property type="entry name" value="GLUTAMATE 5-KINASE"/>
    <property type="match status" value="1"/>
</dbReference>
<dbReference type="PANTHER" id="PTHR43654:SF1">
    <property type="entry name" value="ISOPENTENYL PHOSPHATE KINASE"/>
    <property type="match status" value="1"/>
</dbReference>
<dbReference type="Pfam" id="PF00696">
    <property type="entry name" value="AA_kinase"/>
    <property type="match status" value="1"/>
</dbReference>
<dbReference type="Pfam" id="PF01472">
    <property type="entry name" value="PUA"/>
    <property type="match status" value="1"/>
</dbReference>
<dbReference type="PIRSF" id="PIRSF000729">
    <property type="entry name" value="GK"/>
    <property type="match status" value="1"/>
</dbReference>
<dbReference type="PRINTS" id="PR00474">
    <property type="entry name" value="GLU5KINASE"/>
</dbReference>
<dbReference type="SMART" id="SM00359">
    <property type="entry name" value="PUA"/>
    <property type="match status" value="1"/>
</dbReference>
<dbReference type="SUPFAM" id="SSF53633">
    <property type="entry name" value="Carbamate kinase-like"/>
    <property type="match status" value="1"/>
</dbReference>
<dbReference type="SUPFAM" id="SSF88697">
    <property type="entry name" value="PUA domain-like"/>
    <property type="match status" value="1"/>
</dbReference>
<dbReference type="PROSITE" id="PS00902">
    <property type="entry name" value="GLUTAMATE_5_KINASE"/>
    <property type="match status" value="1"/>
</dbReference>
<dbReference type="PROSITE" id="PS50890">
    <property type="entry name" value="PUA"/>
    <property type="match status" value="1"/>
</dbReference>
<organism>
    <name type="scientific">Mycolicibacterium paratuberculosis (strain ATCC BAA-968 / K-10)</name>
    <name type="common">Mycobacterium paratuberculosis</name>
    <dbReference type="NCBI Taxonomy" id="262316"/>
    <lineage>
        <taxon>Bacteria</taxon>
        <taxon>Bacillati</taxon>
        <taxon>Actinomycetota</taxon>
        <taxon>Actinomycetes</taxon>
        <taxon>Mycobacteriales</taxon>
        <taxon>Mycobacteriaceae</taxon>
        <taxon>Mycobacterium</taxon>
        <taxon>Mycobacterium avium complex (MAC)</taxon>
    </lineage>
</organism>
<evidence type="ECO:0000255" key="1">
    <source>
        <dbReference type="HAMAP-Rule" id="MF_00456"/>
    </source>
</evidence>
<comment type="function">
    <text evidence="1">Catalyzes the transfer of a phosphate group to glutamate to form L-glutamate 5-phosphate.</text>
</comment>
<comment type="catalytic activity">
    <reaction evidence="1">
        <text>L-glutamate + ATP = L-glutamyl 5-phosphate + ADP</text>
        <dbReference type="Rhea" id="RHEA:14877"/>
        <dbReference type="ChEBI" id="CHEBI:29985"/>
        <dbReference type="ChEBI" id="CHEBI:30616"/>
        <dbReference type="ChEBI" id="CHEBI:58274"/>
        <dbReference type="ChEBI" id="CHEBI:456216"/>
        <dbReference type="EC" id="2.7.2.11"/>
    </reaction>
</comment>
<comment type="pathway">
    <text evidence="1">Amino-acid biosynthesis; L-proline biosynthesis; L-glutamate 5-semialdehyde from L-glutamate: step 1/2.</text>
</comment>
<comment type="subcellular location">
    <subcellularLocation>
        <location evidence="1">Cytoplasm</location>
    </subcellularLocation>
</comment>
<comment type="similarity">
    <text evidence="1">Belongs to the glutamate 5-kinase family.</text>
</comment>
<reference key="1">
    <citation type="journal article" date="2005" name="Proc. Natl. Acad. Sci. U.S.A.">
        <title>The complete genome sequence of Mycobacterium avium subspecies paratuberculosis.</title>
        <authorList>
            <person name="Li L."/>
            <person name="Bannantine J.P."/>
            <person name="Zhang Q."/>
            <person name="Amonsin A."/>
            <person name="May B.J."/>
            <person name="Alt D."/>
            <person name="Banerji N."/>
            <person name="Kanjilal S."/>
            <person name="Kapur V."/>
        </authorList>
    </citation>
    <scope>NUCLEOTIDE SEQUENCE [LARGE SCALE GENOMIC DNA]</scope>
    <source>
        <strain>ATCC BAA-968 / K-10</strain>
    </source>
</reference>
<gene>
    <name evidence="1" type="primary">proB</name>
    <name type="ordered locus">MAP_2263c</name>
</gene>
<keyword id="KW-0028">Amino-acid biosynthesis</keyword>
<keyword id="KW-0067">ATP-binding</keyword>
<keyword id="KW-0963">Cytoplasm</keyword>
<keyword id="KW-0418">Kinase</keyword>
<keyword id="KW-0547">Nucleotide-binding</keyword>
<keyword id="KW-0641">Proline biosynthesis</keyword>
<keyword id="KW-1185">Reference proteome</keyword>
<keyword id="KW-0808">Transferase</keyword>
<accession>Q73XP6</accession>
<sequence length="367" mass="37889">MTAHRDAIRTARSMVVKVGTNALTTPAGVFDAGRLAGLADAIEARMKAGTDVVIVSSGAIAAGIEPLGLSRRPRDLATKQAAASVGQVALVNSWSAAFARYGRTVGQVLLSAHDISMRAQHTNAQRTLDRLRALHAVAIVNENDTVATNEIRFGDNDRLSALVAHLVGAEALVLLSDIDGLYDSDPRKTKGAKFIPEVTGAEDLAGVVAGPGSDLGTGGMTSKMSSALLAADAGVPVLLAAAADAASALTDASVGTVFAARPVRMSARRFWVRYAAEAAGALTLDEGAVRAVVHQRRSLLPAGITAVSGRFYAGDVVELRGPDAVPVARGVVAYDTTELATMMGRSTSELPGELRRPAVHADDLVAV</sequence>
<protein>
    <recommendedName>
        <fullName evidence="1">Glutamate 5-kinase</fullName>
        <ecNumber evidence="1">2.7.2.11</ecNumber>
    </recommendedName>
    <alternativeName>
        <fullName evidence="1">Gamma-glutamyl kinase</fullName>
        <shortName evidence="1">GK</shortName>
    </alternativeName>
</protein>